<sequence length="199" mass="22840">MFISFEGTEGVGKTTLIRKIHQHFEEQGKQVVLTREPGGTPLAEQIRSMLLAVNHDENMSHDTELLLIYAARAQHLQQVILPALESNKIVLSDRFTDASFAYQCSGRGLSQDKLQLLNQNFVSRMPEVTFWLDAPIELGMNRARERGALDRFEQEKLSFFTKVREGYETLWKAEPERIKRLDATQSPDQVFEQALQYLA</sequence>
<dbReference type="EC" id="2.7.4.9" evidence="1"/>
<dbReference type="EMBL" id="CP000863">
    <property type="protein sequence ID" value="ACC58116.1"/>
    <property type="molecule type" value="Genomic_DNA"/>
</dbReference>
<dbReference type="RefSeq" id="WP_000470763.1">
    <property type="nucleotide sequence ID" value="NZ_CP031380.1"/>
</dbReference>
<dbReference type="SMR" id="B2HWQ7"/>
<dbReference type="GeneID" id="92894837"/>
<dbReference type="KEGG" id="abc:ACICU_02804"/>
<dbReference type="HOGENOM" id="CLU_049131_0_2_6"/>
<dbReference type="Proteomes" id="UP000008839">
    <property type="component" value="Chromosome"/>
</dbReference>
<dbReference type="GO" id="GO:0005829">
    <property type="term" value="C:cytosol"/>
    <property type="evidence" value="ECO:0007669"/>
    <property type="project" value="TreeGrafter"/>
</dbReference>
<dbReference type="GO" id="GO:0005524">
    <property type="term" value="F:ATP binding"/>
    <property type="evidence" value="ECO:0007669"/>
    <property type="project" value="UniProtKB-UniRule"/>
</dbReference>
<dbReference type="GO" id="GO:0004798">
    <property type="term" value="F:dTMP kinase activity"/>
    <property type="evidence" value="ECO:0007669"/>
    <property type="project" value="UniProtKB-UniRule"/>
</dbReference>
<dbReference type="GO" id="GO:0006233">
    <property type="term" value="P:dTDP biosynthetic process"/>
    <property type="evidence" value="ECO:0007669"/>
    <property type="project" value="InterPro"/>
</dbReference>
<dbReference type="GO" id="GO:0006235">
    <property type="term" value="P:dTTP biosynthetic process"/>
    <property type="evidence" value="ECO:0007669"/>
    <property type="project" value="UniProtKB-UniRule"/>
</dbReference>
<dbReference type="GO" id="GO:0006227">
    <property type="term" value="P:dUDP biosynthetic process"/>
    <property type="evidence" value="ECO:0007669"/>
    <property type="project" value="TreeGrafter"/>
</dbReference>
<dbReference type="CDD" id="cd01672">
    <property type="entry name" value="TMPK"/>
    <property type="match status" value="1"/>
</dbReference>
<dbReference type="FunFam" id="3.40.50.300:FF:000225">
    <property type="entry name" value="Thymidylate kinase"/>
    <property type="match status" value="1"/>
</dbReference>
<dbReference type="Gene3D" id="3.40.50.300">
    <property type="entry name" value="P-loop containing nucleotide triphosphate hydrolases"/>
    <property type="match status" value="1"/>
</dbReference>
<dbReference type="HAMAP" id="MF_00165">
    <property type="entry name" value="Thymidylate_kinase"/>
    <property type="match status" value="1"/>
</dbReference>
<dbReference type="InterPro" id="IPR027417">
    <property type="entry name" value="P-loop_NTPase"/>
</dbReference>
<dbReference type="InterPro" id="IPR039430">
    <property type="entry name" value="Thymidylate_kin-like_dom"/>
</dbReference>
<dbReference type="InterPro" id="IPR018094">
    <property type="entry name" value="Thymidylate_kinase"/>
</dbReference>
<dbReference type="NCBIfam" id="TIGR00041">
    <property type="entry name" value="DTMP_kinase"/>
    <property type="match status" value="1"/>
</dbReference>
<dbReference type="PANTHER" id="PTHR10344">
    <property type="entry name" value="THYMIDYLATE KINASE"/>
    <property type="match status" value="1"/>
</dbReference>
<dbReference type="PANTHER" id="PTHR10344:SF4">
    <property type="entry name" value="UMP-CMP KINASE 2, MITOCHONDRIAL"/>
    <property type="match status" value="1"/>
</dbReference>
<dbReference type="Pfam" id="PF02223">
    <property type="entry name" value="Thymidylate_kin"/>
    <property type="match status" value="1"/>
</dbReference>
<dbReference type="SUPFAM" id="SSF52540">
    <property type="entry name" value="P-loop containing nucleoside triphosphate hydrolases"/>
    <property type="match status" value="1"/>
</dbReference>
<feature type="chain" id="PRO_1000097366" description="Thymidylate kinase">
    <location>
        <begin position="1"/>
        <end position="199"/>
    </location>
</feature>
<feature type="binding site" evidence="1">
    <location>
        <begin position="7"/>
        <end position="14"/>
    </location>
    <ligand>
        <name>ATP</name>
        <dbReference type="ChEBI" id="CHEBI:30616"/>
    </ligand>
</feature>
<evidence type="ECO:0000255" key="1">
    <source>
        <dbReference type="HAMAP-Rule" id="MF_00165"/>
    </source>
</evidence>
<organism>
    <name type="scientific">Acinetobacter baumannii (strain ACICU)</name>
    <dbReference type="NCBI Taxonomy" id="405416"/>
    <lineage>
        <taxon>Bacteria</taxon>
        <taxon>Pseudomonadati</taxon>
        <taxon>Pseudomonadota</taxon>
        <taxon>Gammaproteobacteria</taxon>
        <taxon>Moraxellales</taxon>
        <taxon>Moraxellaceae</taxon>
        <taxon>Acinetobacter</taxon>
        <taxon>Acinetobacter calcoaceticus/baumannii complex</taxon>
    </lineage>
</organism>
<proteinExistence type="inferred from homology"/>
<keyword id="KW-0067">ATP-binding</keyword>
<keyword id="KW-0418">Kinase</keyword>
<keyword id="KW-0545">Nucleotide biosynthesis</keyword>
<keyword id="KW-0547">Nucleotide-binding</keyword>
<keyword id="KW-0808">Transferase</keyword>
<gene>
    <name evidence="1" type="primary">tmk</name>
    <name type="ordered locus">ACICU_02804</name>
</gene>
<comment type="function">
    <text evidence="1">Phosphorylation of dTMP to form dTDP in both de novo and salvage pathways of dTTP synthesis.</text>
</comment>
<comment type="catalytic activity">
    <reaction evidence="1">
        <text>dTMP + ATP = dTDP + ADP</text>
        <dbReference type="Rhea" id="RHEA:13517"/>
        <dbReference type="ChEBI" id="CHEBI:30616"/>
        <dbReference type="ChEBI" id="CHEBI:58369"/>
        <dbReference type="ChEBI" id="CHEBI:63528"/>
        <dbReference type="ChEBI" id="CHEBI:456216"/>
        <dbReference type="EC" id="2.7.4.9"/>
    </reaction>
</comment>
<comment type="similarity">
    <text evidence="1">Belongs to the thymidylate kinase family.</text>
</comment>
<accession>B2HWQ7</accession>
<name>KTHY_ACIBC</name>
<protein>
    <recommendedName>
        <fullName evidence="1">Thymidylate kinase</fullName>
        <ecNumber evidence="1">2.7.4.9</ecNumber>
    </recommendedName>
    <alternativeName>
        <fullName evidence="1">dTMP kinase</fullName>
    </alternativeName>
</protein>
<reference key="1">
    <citation type="journal article" date="2008" name="Antimicrob. Agents Chemother.">
        <title>Whole-genome pyrosequencing of an epidemic multidrug-resistant Acinetobacter baumannii strain belonging to the European clone II group.</title>
        <authorList>
            <person name="Iacono M."/>
            <person name="Villa L."/>
            <person name="Fortini D."/>
            <person name="Bordoni R."/>
            <person name="Imperi F."/>
            <person name="Bonnal R.J."/>
            <person name="Sicheritz-Ponten T."/>
            <person name="De Bellis G."/>
            <person name="Visca P."/>
            <person name="Cassone A."/>
            <person name="Carattoli A."/>
        </authorList>
    </citation>
    <scope>NUCLEOTIDE SEQUENCE [LARGE SCALE GENOMIC DNA]</scope>
    <source>
        <strain>ACICU</strain>
    </source>
</reference>